<sequence>MIELRNVTKTYSAKQGGVLALSDINLRVSAGEMFGVIGKSGAGKSTLIRCVNLLERPDKGSVIVDGQVLTTLSSKVLRQARHRMGMVFQHFNLLSARTAYQNIAFPLQLLGKNPTEIRKVVLPLLELTDLTAKINAYPSQLSGGQKQRVAIARALVTNPTVLLCDEMTSALDPETTHSILQLLKNINRELNLSILLITHEMEVIKTVADRVAVLDQGRIVEENDVVSLFKRPKTEIAKKFTHSSIKVKLPEILRNRLQKTTLDEGYALLRIDFTEHTAETPIIDEFIRKFDLQVNILQARLEFLRDDSIGMMLVALRNVKDTLPQGIAYLNEKGLQVEVLGYVSADDWRYR</sequence>
<feature type="chain" id="PRO_0000270290" description="Methionine import ATP-binding protein MetN">
    <location>
        <begin position="1"/>
        <end position="351"/>
    </location>
</feature>
<feature type="domain" description="ABC transporter" evidence="1">
    <location>
        <begin position="2"/>
        <end position="241"/>
    </location>
</feature>
<feature type="binding site" evidence="1">
    <location>
        <begin position="38"/>
        <end position="45"/>
    </location>
    <ligand>
        <name>ATP</name>
        <dbReference type="ChEBI" id="CHEBI:30616"/>
    </ligand>
</feature>
<evidence type="ECO:0000255" key="1">
    <source>
        <dbReference type="HAMAP-Rule" id="MF_01719"/>
    </source>
</evidence>
<name>METN_COXBU</name>
<reference key="1">
    <citation type="journal article" date="2003" name="Proc. Natl. Acad. Sci. U.S.A.">
        <title>Complete genome sequence of the Q-fever pathogen, Coxiella burnetii.</title>
        <authorList>
            <person name="Seshadri R."/>
            <person name="Paulsen I.T."/>
            <person name="Eisen J.A."/>
            <person name="Read T.D."/>
            <person name="Nelson K.E."/>
            <person name="Nelson W.C."/>
            <person name="Ward N.L."/>
            <person name="Tettelin H."/>
            <person name="Davidsen T.M."/>
            <person name="Beanan M.J."/>
            <person name="DeBoy R.T."/>
            <person name="Daugherty S.C."/>
            <person name="Brinkac L.M."/>
            <person name="Madupu R."/>
            <person name="Dodson R.J."/>
            <person name="Khouri H.M."/>
            <person name="Lee K.H."/>
            <person name="Carty H.A."/>
            <person name="Scanlan D."/>
            <person name="Heinzen R.A."/>
            <person name="Thompson H.A."/>
            <person name="Samuel J.E."/>
            <person name="Fraser C.M."/>
            <person name="Heidelberg J.F."/>
        </authorList>
    </citation>
    <scope>NUCLEOTIDE SEQUENCE [LARGE SCALE GENOMIC DNA]</scope>
    <source>
        <strain>RSA 493 / Nine Mile phase I</strain>
    </source>
</reference>
<dbReference type="EC" id="7.4.2.11" evidence="1"/>
<dbReference type="EMBL" id="AE016828">
    <property type="protein sequence ID" value="AAO89671.1"/>
    <property type="molecule type" value="Genomic_DNA"/>
</dbReference>
<dbReference type="RefSeq" id="NP_819157.1">
    <property type="nucleotide sequence ID" value="NC_002971.3"/>
</dbReference>
<dbReference type="RefSeq" id="WP_010957385.1">
    <property type="nucleotide sequence ID" value="NZ_CCYB01000063.1"/>
</dbReference>
<dbReference type="SMR" id="Q83F44"/>
<dbReference type="STRING" id="227377.CBU_0107"/>
<dbReference type="EnsemblBacteria" id="AAO89671">
    <property type="protein sequence ID" value="AAO89671"/>
    <property type="gene ID" value="CBU_0107"/>
</dbReference>
<dbReference type="GeneID" id="1207978"/>
<dbReference type="KEGG" id="cbu:CBU_0107"/>
<dbReference type="PATRIC" id="fig|227377.7.peg.109"/>
<dbReference type="eggNOG" id="COG1135">
    <property type="taxonomic scope" value="Bacteria"/>
</dbReference>
<dbReference type="HOGENOM" id="CLU_000604_1_3_6"/>
<dbReference type="OrthoDB" id="9802264at2"/>
<dbReference type="Proteomes" id="UP000002671">
    <property type="component" value="Chromosome"/>
</dbReference>
<dbReference type="GO" id="GO:0005886">
    <property type="term" value="C:plasma membrane"/>
    <property type="evidence" value="ECO:0007669"/>
    <property type="project" value="UniProtKB-SubCell"/>
</dbReference>
<dbReference type="GO" id="GO:0033232">
    <property type="term" value="F:ABC-type D-methionine transporter activity"/>
    <property type="evidence" value="ECO:0007669"/>
    <property type="project" value="UniProtKB-EC"/>
</dbReference>
<dbReference type="GO" id="GO:0005524">
    <property type="term" value="F:ATP binding"/>
    <property type="evidence" value="ECO:0007669"/>
    <property type="project" value="UniProtKB-KW"/>
</dbReference>
<dbReference type="GO" id="GO:0016887">
    <property type="term" value="F:ATP hydrolysis activity"/>
    <property type="evidence" value="ECO:0007669"/>
    <property type="project" value="InterPro"/>
</dbReference>
<dbReference type="CDD" id="cd03258">
    <property type="entry name" value="ABC_MetN_methionine_transporter"/>
    <property type="match status" value="1"/>
</dbReference>
<dbReference type="FunFam" id="3.40.50.300:FF:000056">
    <property type="entry name" value="Cell division ATP-binding protein FtsE"/>
    <property type="match status" value="1"/>
</dbReference>
<dbReference type="Gene3D" id="3.30.70.260">
    <property type="match status" value="1"/>
</dbReference>
<dbReference type="Gene3D" id="3.40.50.300">
    <property type="entry name" value="P-loop containing nucleotide triphosphate hydrolases"/>
    <property type="match status" value="1"/>
</dbReference>
<dbReference type="InterPro" id="IPR003593">
    <property type="entry name" value="AAA+_ATPase"/>
</dbReference>
<dbReference type="InterPro" id="IPR003439">
    <property type="entry name" value="ABC_transporter-like_ATP-bd"/>
</dbReference>
<dbReference type="InterPro" id="IPR017871">
    <property type="entry name" value="ABC_transporter-like_CS"/>
</dbReference>
<dbReference type="InterPro" id="IPR045865">
    <property type="entry name" value="ACT-like_dom_sf"/>
</dbReference>
<dbReference type="InterPro" id="IPR041701">
    <property type="entry name" value="MetN_ABC"/>
</dbReference>
<dbReference type="InterPro" id="IPR050086">
    <property type="entry name" value="MetN_ABC_transporter-like"/>
</dbReference>
<dbReference type="InterPro" id="IPR018449">
    <property type="entry name" value="NIL_domain"/>
</dbReference>
<dbReference type="InterPro" id="IPR027417">
    <property type="entry name" value="P-loop_NTPase"/>
</dbReference>
<dbReference type="PANTHER" id="PTHR43166">
    <property type="entry name" value="AMINO ACID IMPORT ATP-BINDING PROTEIN"/>
    <property type="match status" value="1"/>
</dbReference>
<dbReference type="PANTHER" id="PTHR43166:SF30">
    <property type="entry name" value="METHIONINE IMPORT ATP-BINDING PROTEIN METN"/>
    <property type="match status" value="1"/>
</dbReference>
<dbReference type="Pfam" id="PF00005">
    <property type="entry name" value="ABC_tran"/>
    <property type="match status" value="1"/>
</dbReference>
<dbReference type="Pfam" id="PF09383">
    <property type="entry name" value="NIL"/>
    <property type="match status" value="1"/>
</dbReference>
<dbReference type="SMART" id="SM00382">
    <property type="entry name" value="AAA"/>
    <property type="match status" value="1"/>
</dbReference>
<dbReference type="SMART" id="SM00930">
    <property type="entry name" value="NIL"/>
    <property type="match status" value="1"/>
</dbReference>
<dbReference type="SUPFAM" id="SSF55021">
    <property type="entry name" value="ACT-like"/>
    <property type="match status" value="1"/>
</dbReference>
<dbReference type="SUPFAM" id="SSF52540">
    <property type="entry name" value="P-loop containing nucleoside triphosphate hydrolases"/>
    <property type="match status" value="1"/>
</dbReference>
<dbReference type="PROSITE" id="PS00211">
    <property type="entry name" value="ABC_TRANSPORTER_1"/>
    <property type="match status" value="1"/>
</dbReference>
<dbReference type="PROSITE" id="PS50893">
    <property type="entry name" value="ABC_TRANSPORTER_2"/>
    <property type="match status" value="1"/>
</dbReference>
<dbReference type="PROSITE" id="PS51264">
    <property type="entry name" value="METN"/>
    <property type="match status" value="1"/>
</dbReference>
<organism>
    <name type="scientific">Coxiella burnetii (strain RSA 493 / Nine Mile phase I)</name>
    <dbReference type="NCBI Taxonomy" id="227377"/>
    <lineage>
        <taxon>Bacteria</taxon>
        <taxon>Pseudomonadati</taxon>
        <taxon>Pseudomonadota</taxon>
        <taxon>Gammaproteobacteria</taxon>
        <taxon>Legionellales</taxon>
        <taxon>Coxiellaceae</taxon>
        <taxon>Coxiella</taxon>
    </lineage>
</organism>
<accession>Q83F44</accession>
<proteinExistence type="inferred from homology"/>
<comment type="function">
    <text evidence="1">Part of the ABC transporter complex MetNIQ involved in methionine import. Responsible for energy coupling to the transport system.</text>
</comment>
<comment type="catalytic activity">
    <reaction evidence="1">
        <text>L-methionine(out) + ATP + H2O = L-methionine(in) + ADP + phosphate + H(+)</text>
        <dbReference type="Rhea" id="RHEA:29779"/>
        <dbReference type="ChEBI" id="CHEBI:15377"/>
        <dbReference type="ChEBI" id="CHEBI:15378"/>
        <dbReference type="ChEBI" id="CHEBI:30616"/>
        <dbReference type="ChEBI" id="CHEBI:43474"/>
        <dbReference type="ChEBI" id="CHEBI:57844"/>
        <dbReference type="ChEBI" id="CHEBI:456216"/>
        <dbReference type="EC" id="7.4.2.11"/>
    </reaction>
</comment>
<comment type="catalytic activity">
    <reaction evidence="1">
        <text>D-methionine(out) + ATP + H2O = D-methionine(in) + ADP + phosphate + H(+)</text>
        <dbReference type="Rhea" id="RHEA:29767"/>
        <dbReference type="ChEBI" id="CHEBI:15377"/>
        <dbReference type="ChEBI" id="CHEBI:15378"/>
        <dbReference type="ChEBI" id="CHEBI:30616"/>
        <dbReference type="ChEBI" id="CHEBI:43474"/>
        <dbReference type="ChEBI" id="CHEBI:57932"/>
        <dbReference type="ChEBI" id="CHEBI:456216"/>
        <dbReference type="EC" id="7.4.2.11"/>
    </reaction>
</comment>
<comment type="subunit">
    <text evidence="1">The complex is composed of two ATP-binding proteins (MetN), two transmembrane proteins (MetI) and a solute-binding protein (MetQ).</text>
</comment>
<comment type="subcellular location">
    <subcellularLocation>
        <location evidence="1">Cell inner membrane</location>
        <topology evidence="1">Peripheral membrane protein</topology>
    </subcellularLocation>
</comment>
<comment type="similarity">
    <text evidence="1">Belongs to the ABC transporter superfamily. Methionine importer (TC 3.A.1.24) family.</text>
</comment>
<gene>
    <name evidence="1" type="primary">metN</name>
    <name type="ordered locus">CBU_0107</name>
</gene>
<protein>
    <recommendedName>
        <fullName evidence="1">Methionine import ATP-binding protein MetN</fullName>
        <ecNumber evidence="1">7.4.2.11</ecNumber>
    </recommendedName>
</protein>
<keyword id="KW-0029">Amino-acid transport</keyword>
<keyword id="KW-0067">ATP-binding</keyword>
<keyword id="KW-0997">Cell inner membrane</keyword>
<keyword id="KW-1003">Cell membrane</keyword>
<keyword id="KW-0472">Membrane</keyword>
<keyword id="KW-0547">Nucleotide-binding</keyword>
<keyword id="KW-1185">Reference proteome</keyword>
<keyword id="KW-1278">Translocase</keyword>
<keyword id="KW-0813">Transport</keyword>